<dbReference type="EMBL" id="AB028622">
    <property type="protein sequence ID" value="BAB01369.1"/>
    <property type="molecule type" value="Genomic_DNA"/>
</dbReference>
<dbReference type="EMBL" id="CP002686">
    <property type="protein sequence ID" value="AEE76566.1"/>
    <property type="molecule type" value="Genomic_DNA"/>
</dbReference>
<dbReference type="EMBL" id="BT003889">
    <property type="protein sequence ID" value="AAO41937.1"/>
    <property type="molecule type" value="mRNA"/>
</dbReference>
<dbReference type="EMBL" id="BT015914">
    <property type="protein sequence ID" value="AAU95450.1"/>
    <property type="molecule type" value="mRNA"/>
</dbReference>
<dbReference type="RefSeq" id="NP_188830.1">
    <property type="nucleotide sequence ID" value="NM_113088.3"/>
</dbReference>
<dbReference type="SMR" id="Q9LRM1"/>
<dbReference type="STRING" id="3702.Q9LRM1"/>
<dbReference type="PaxDb" id="3702-AT3G21920.1"/>
<dbReference type="EnsemblPlants" id="AT3G21920.1">
    <property type="protein sequence ID" value="AT3G21920.1"/>
    <property type="gene ID" value="AT3G21920"/>
</dbReference>
<dbReference type="GeneID" id="821747"/>
<dbReference type="Gramene" id="AT3G21920.1">
    <property type="protein sequence ID" value="AT3G21920.1"/>
    <property type="gene ID" value="AT3G21920"/>
</dbReference>
<dbReference type="KEGG" id="ath:AT3G21920"/>
<dbReference type="Araport" id="AT3G21920"/>
<dbReference type="TAIR" id="AT3G21920"/>
<dbReference type="eggNOG" id="ENOG502QPWH">
    <property type="taxonomic scope" value="Eukaryota"/>
</dbReference>
<dbReference type="HOGENOM" id="CLU_000288_35_0_1"/>
<dbReference type="InParanoid" id="Q9LRM1"/>
<dbReference type="PhylomeDB" id="Q9LRM1"/>
<dbReference type="PRO" id="PR:Q9LRM1"/>
<dbReference type="Proteomes" id="UP000006548">
    <property type="component" value="Chromosome 3"/>
</dbReference>
<dbReference type="ExpressionAtlas" id="Q9LRM1">
    <property type="expression patterns" value="baseline"/>
</dbReference>
<dbReference type="GO" id="GO:0005576">
    <property type="term" value="C:extracellular region"/>
    <property type="evidence" value="ECO:0007669"/>
    <property type="project" value="UniProtKB-SubCell"/>
</dbReference>
<dbReference type="CDD" id="cd23509">
    <property type="entry name" value="Gnk2-like"/>
    <property type="match status" value="2"/>
</dbReference>
<dbReference type="Gene3D" id="3.30.430.20">
    <property type="entry name" value="Gnk2 domain, C-X8-C-X2-C motif"/>
    <property type="match status" value="2"/>
</dbReference>
<dbReference type="InterPro" id="IPR050581">
    <property type="entry name" value="CRR_secretory_protein"/>
</dbReference>
<dbReference type="InterPro" id="IPR002902">
    <property type="entry name" value="GNK2"/>
</dbReference>
<dbReference type="InterPro" id="IPR038408">
    <property type="entry name" value="GNK2_sf"/>
</dbReference>
<dbReference type="PANTHER" id="PTHR32411:SF53">
    <property type="entry name" value="CYSTEINE-RICH REPEAT SECRETORY PROTEIN 18-RELATED"/>
    <property type="match status" value="1"/>
</dbReference>
<dbReference type="PANTHER" id="PTHR32411">
    <property type="entry name" value="CYSTEINE-RICH REPEAT SECRETORY PROTEIN 38-RELATED"/>
    <property type="match status" value="1"/>
</dbReference>
<dbReference type="Pfam" id="PF01657">
    <property type="entry name" value="Stress-antifung"/>
    <property type="match status" value="2"/>
</dbReference>
<dbReference type="PROSITE" id="PS51473">
    <property type="entry name" value="GNK2"/>
    <property type="match status" value="2"/>
</dbReference>
<feature type="signal peptide" evidence="1">
    <location>
        <begin position="1"/>
        <end position="32"/>
    </location>
</feature>
<feature type="chain" id="PRO_0000296146" description="Cysteine-rich repeat secretory protein 18">
    <location>
        <begin position="33"/>
        <end position="278"/>
    </location>
</feature>
<feature type="domain" description="Gnk2-homologous 1" evidence="2">
    <location>
        <begin position="39"/>
        <end position="147"/>
    </location>
</feature>
<feature type="domain" description="Gnk2-homologous 2" evidence="2">
    <location>
        <begin position="160"/>
        <end position="267"/>
    </location>
</feature>
<gene>
    <name type="primary">CRRSP18</name>
    <name type="ordered locus">At3g21920</name>
    <name type="ORF">MZN24.4</name>
</gene>
<keyword id="KW-1185">Reference proteome</keyword>
<keyword id="KW-0677">Repeat</keyword>
<keyword id="KW-0964">Secreted</keyword>
<keyword id="KW-0732">Signal</keyword>
<protein>
    <recommendedName>
        <fullName>Cysteine-rich repeat secretory protein 18</fullName>
    </recommendedName>
</protein>
<reference key="1">
    <citation type="journal article" date="2000" name="DNA Res.">
        <title>Structural analysis of Arabidopsis thaliana chromosome 3. I. Sequence features of the regions of 4,504,864 bp covered by sixty P1 and TAC clones.</title>
        <authorList>
            <person name="Sato S."/>
            <person name="Nakamura Y."/>
            <person name="Kaneko T."/>
            <person name="Katoh T."/>
            <person name="Asamizu E."/>
            <person name="Tabata S."/>
        </authorList>
    </citation>
    <scope>NUCLEOTIDE SEQUENCE [LARGE SCALE GENOMIC DNA]</scope>
    <source>
        <strain>cv. Columbia</strain>
    </source>
</reference>
<reference key="2">
    <citation type="journal article" date="2017" name="Plant J.">
        <title>Araport11: a complete reannotation of the Arabidopsis thaliana reference genome.</title>
        <authorList>
            <person name="Cheng C.Y."/>
            <person name="Krishnakumar V."/>
            <person name="Chan A.P."/>
            <person name="Thibaud-Nissen F."/>
            <person name="Schobel S."/>
            <person name="Town C.D."/>
        </authorList>
    </citation>
    <scope>GENOME REANNOTATION</scope>
    <source>
        <strain>cv. Columbia</strain>
    </source>
</reference>
<reference key="3">
    <citation type="journal article" date="2003" name="Science">
        <title>Empirical analysis of transcriptional activity in the Arabidopsis genome.</title>
        <authorList>
            <person name="Yamada K."/>
            <person name="Lim J."/>
            <person name="Dale J.M."/>
            <person name="Chen H."/>
            <person name="Shinn P."/>
            <person name="Palm C.J."/>
            <person name="Southwick A.M."/>
            <person name="Wu H.C."/>
            <person name="Kim C.J."/>
            <person name="Nguyen M."/>
            <person name="Pham P.K."/>
            <person name="Cheuk R.F."/>
            <person name="Karlin-Newmann G."/>
            <person name="Liu S.X."/>
            <person name="Lam B."/>
            <person name="Sakano H."/>
            <person name="Wu T."/>
            <person name="Yu G."/>
            <person name="Miranda M."/>
            <person name="Quach H.L."/>
            <person name="Tripp M."/>
            <person name="Chang C.H."/>
            <person name="Lee J.M."/>
            <person name="Toriumi M.J."/>
            <person name="Chan M.M."/>
            <person name="Tang C.C."/>
            <person name="Onodera C.S."/>
            <person name="Deng J.M."/>
            <person name="Akiyama K."/>
            <person name="Ansari Y."/>
            <person name="Arakawa T."/>
            <person name="Banh J."/>
            <person name="Banno F."/>
            <person name="Bowser L."/>
            <person name="Brooks S.Y."/>
            <person name="Carninci P."/>
            <person name="Chao Q."/>
            <person name="Choy N."/>
            <person name="Enju A."/>
            <person name="Goldsmith A.D."/>
            <person name="Gurjal M."/>
            <person name="Hansen N.F."/>
            <person name="Hayashizaki Y."/>
            <person name="Johnson-Hopson C."/>
            <person name="Hsuan V.W."/>
            <person name="Iida K."/>
            <person name="Karnes M."/>
            <person name="Khan S."/>
            <person name="Koesema E."/>
            <person name="Ishida J."/>
            <person name="Jiang P.X."/>
            <person name="Jones T."/>
            <person name="Kawai J."/>
            <person name="Kamiya A."/>
            <person name="Meyers C."/>
            <person name="Nakajima M."/>
            <person name="Narusaka M."/>
            <person name="Seki M."/>
            <person name="Sakurai T."/>
            <person name="Satou M."/>
            <person name="Tamse R."/>
            <person name="Vaysberg M."/>
            <person name="Wallender E.K."/>
            <person name="Wong C."/>
            <person name="Yamamura Y."/>
            <person name="Yuan S."/>
            <person name="Shinozaki K."/>
            <person name="Davis R.W."/>
            <person name="Theologis A."/>
            <person name="Ecker J.R."/>
        </authorList>
    </citation>
    <scope>NUCLEOTIDE SEQUENCE [LARGE SCALE MRNA]</scope>
    <source>
        <strain>cv. Columbia</strain>
    </source>
</reference>
<reference key="4">
    <citation type="submission" date="2004-10" db="EMBL/GenBank/DDBJ databases">
        <title>Arabidopsis ORF clones.</title>
        <authorList>
            <person name="Cheuk R.F."/>
            <person name="Chen H."/>
            <person name="Kim C.J."/>
            <person name="Shinn P."/>
            <person name="Ecker J.R."/>
        </authorList>
    </citation>
    <scope>NUCLEOTIDE SEQUENCE [LARGE SCALE MRNA]</scope>
    <source>
        <strain>cv. Columbia</strain>
    </source>
</reference>
<reference key="5">
    <citation type="journal article" date="2001" name="Plant Physiol.">
        <title>A superfamily of proteins with novel cysteine-rich repeats.</title>
        <authorList>
            <person name="Chen Z."/>
        </authorList>
    </citation>
    <scope>GENE FAMILY ORGANIZATION</scope>
    <scope>NOMENCLATURE</scope>
</reference>
<accession>Q9LRM1</accession>
<organism>
    <name type="scientific">Arabidopsis thaliana</name>
    <name type="common">Mouse-ear cress</name>
    <dbReference type="NCBI Taxonomy" id="3702"/>
    <lineage>
        <taxon>Eukaryota</taxon>
        <taxon>Viridiplantae</taxon>
        <taxon>Streptophyta</taxon>
        <taxon>Embryophyta</taxon>
        <taxon>Tracheophyta</taxon>
        <taxon>Spermatophyta</taxon>
        <taxon>Magnoliopsida</taxon>
        <taxon>eudicotyledons</taxon>
        <taxon>Gunneridae</taxon>
        <taxon>Pentapetalae</taxon>
        <taxon>rosids</taxon>
        <taxon>malvids</taxon>
        <taxon>Brassicales</taxon>
        <taxon>Brassicaceae</taxon>
        <taxon>Camelineae</taxon>
        <taxon>Arabidopsis</taxon>
    </lineage>
</organism>
<evidence type="ECO:0000255" key="1"/>
<evidence type="ECO:0000255" key="2">
    <source>
        <dbReference type="PROSITE-ProRule" id="PRU00806"/>
    </source>
</evidence>
<evidence type="ECO:0000305" key="3"/>
<comment type="subcellular location">
    <subcellularLocation>
        <location evidence="3">Secreted</location>
    </subcellularLocation>
</comment>
<comment type="similarity">
    <text evidence="3">Belongs to the cysteine-rich repeat secretory protein family.</text>
</comment>
<proteinExistence type="evidence at transcript level"/>
<sequence length="278" mass="31777">MYSSSSVSKRFVLVPIVVVVTTQLLLVRNVSSLNLTNSYLHHKCVVNQGKYKPGSKYEKSLDDIIQSFSNKDKDSYGFRTGYSMKAYGKEPDMVSITYQCRIDSRGPKCQSCVVTAGYELLRKRCPRYKEAIIWYDQCLVEFSSLDTSGQINYDDNFCMPSAKNLIGNSISLEERLHLLNNLTKIAVTKIDKNIEGIKKPVLYAAGEKRLGTKSLYGMVQCSADLSVQGCNECMLYYIVHFQECWENKQGVRVLSRSCNFRYELYPFINPKGPYYTKF</sequence>
<name>CRR18_ARATH</name>